<proteinExistence type="inferred from homology"/>
<keyword id="KW-0106">Calcium</keyword>
<keyword id="KW-0378">Hydrolase</keyword>
<keyword id="KW-0442">Lipid degradation</keyword>
<keyword id="KW-0443">Lipid metabolism</keyword>
<keyword id="KW-0479">Metal-binding</keyword>
<keyword id="KW-0964">Secreted</keyword>
<keyword id="KW-0732">Signal</keyword>
<keyword id="KW-0865">Zymogen</keyword>
<name>LIP2_STAAR</name>
<dbReference type="EC" id="3.1.1.3"/>
<dbReference type="EMBL" id="BX571856">
    <property type="protein sequence ID" value="CAG39341.1"/>
    <property type="molecule type" value="Genomic_DNA"/>
</dbReference>
<dbReference type="RefSeq" id="WP_000943842.1">
    <property type="nucleotide sequence ID" value="NC_002952.2"/>
</dbReference>
<dbReference type="SMR" id="Q6GJZ6"/>
<dbReference type="ESTHER" id="staau-lipas">
    <property type="family name" value="Bacterial_lip_FamI.6"/>
</dbReference>
<dbReference type="KEGG" id="sar:SAR0317"/>
<dbReference type="HOGENOM" id="CLU_023555_2_0_9"/>
<dbReference type="Proteomes" id="UP000000596">
    <property type="component" value="Chromosome"/>
</dbReference>
<dbReference type="GO" id="GO:0005576">
    <property type="term" value="C:extracellular region"/>
    <property type="evidence" value="ECO:0007669"/>
    <property type="project" value="UniProtKB-SubCell"/>
</dbReference>
<dbReference type="GO" id="GO:0046872">
    <property type="term" value="F:metal ion binding"/>
    <property type="evidence" value="ECO:0007669"/>
    <property type="project" value="UniProtKB-KW"/>
</dbReference>
<dbReference type="GO" id="GO:0004806">
    <property type="term" value="F:triacylglycerol lipase activity"/>
    <property type="evidence" value="ECO:0007669"/>
    <property type="project" value="UniProtKB-EC"/>
</dbReference>
<dbReference type="GO" id="GO:0016042">
    <property type="term" value="P:lipid catabolic process"/>
    <property type="evidence" value="ECO:0007669"/>
    <property type="project" value="UniProtKB-KW"/>
</dbReference>
<dbReference type="Gene3D" id="3.40.50.1820">
    <property type="entry name" value="alpha/beta hydrolase"/>
    <property type="match status" value="1"/>
</dbReference>
<dbReference type="InterPro" id="IPR029058">
    <property type="entry name" value="AB_hydrolase_fold"/>
</dbReference>
<dbReference type="InterPro" id="IPR056304">
    <property type="entry name" value="Lip-like_C"/>
</dbReference>
<dbReference type="InterPro" id="IPR005877">
    <property type="entry name" value="YSIRK_signal_dom"/>
</dbReference>
<dbReference type="NCBIfam" id="NF047351">
    <property type="entry name" value="lipase_YSIRK_Sa"/>
    <property type="match status" value="1"/>
</dbReference>
<dbReference type="NCBIfam" id="TIGR01168">
    <property type="entry name" value="YSIRK_signal"/>
    <property type="match status" value="1"/>
</dbReference>
<dbReference type="PANTHER" id="PTHR34043">
    <property type="entry name" value="ALPHA/BETA-HYDROLASES SUPERFAMILY PROTEIN"/>
    <property type="match status" value="1"/>
</dbReference>
<dbReference type="PANTHER" id="PTHR34043:SF3">
    <property type="entry name" value="ALPHA_BETA-HYDROLASES SUPERFAMILY PROTEIN"/>
    <property type="match status" value="1"/>
</dbReference>
<dbReference type="Pfam" id="PF24708">
    <property type="entry name" value="Lip_C"/>
    <property type="match status" value="1"/>
</dbReference>
<dbReference type="Pfam" id="PF04650">
    <property type="entry name" value="YSIRK_signal"/>
    <property type="match status" value="1"/>
</dbReference>
<dbReference type="SUPFAM" id="SSF53474">
    <property type="entry name" value="alpha/beta-Hydrolases"/>
    <property type="match status" value="1"/>
</dbReference>
<dbReference type="PROSITE" id="PS00120">
    <property type="entry name" value="LIPASE_SER"/>
    <property type="match status" value="1"/>
</dbReference>
<organism>
    <name type="scientific">Staphylococcus aureus (strain MRSA252)</name>
    <dbReference type="NCBI Taxonomy" id="282458"/>
    <lineage>
        <taxon>Bacteria</taxon>
        <taxon>Bacillati</taxon>
        <taxon>Bacillota</taxon>
        <taxon>Bacilli</taxon>
        <taxon>Bacillales</taxon>
        <taxon>Staphylococcaceae</taxon>
        <taxon>Staphylococcus</taxon>
    </lineage>
</organism>
<reference key="1">
    <citation type="journal article" date="2004" name="Proc. Natl. Acad. Sci. U.S.A.">
        <title>Complete genomes of two clinical Staphylococcus aureus strains: evidence for the rapid evolution of virulence and drug resistance.</title>
        <authorList>
            <person name="Holden M.T.G."/>
            <person name="Feil E.J."/>
            <person name="Lindsay J.A."/>
            <person name="Peacock S.J."/>
            <person name="Day N.P.J."/>
            <person name="Enright M.C."/>
            <person name="Foster T.J."/>
            <person name="Moore C.E."/>
            <person name="Hurst L."/>
            <person name="Atkin R."/>
            <person name="Barron A."/>
            <person name="Bason N."/>
            <person name="Bentley S.D."/>
            <person name="Chillingworth C."/>
            <person name="Chillingworth T."/>
            <person name="Churcher C."/>
            <person name="Clark L."/>
            <person name="Corton C."/>
            <person name="Cronin A."/>
            <person name="Doggett J."/>
            <person name="Dowd L."/>
            <person name="Feltwell T."/>
            <person name="Hance Z."/>
            <person name="Harris B."/>
            <person name="Hauser H."/>
            <person name="Holroyd S."/>
            <person name="Jagels K."/>
            <person name="James K.D."/>
            <person name="Lennard N."/>
            <person name="Line A."/>
            <person name="Mayes R."/>
            <person name="Moule S."/>
            <person name="Mungall K."/>
            <person name="Ormond D."/>
            <person name="Quail M.A."/>
            <person name="Rabbinowitsch E."/>
            <person name="Rutherford K.M."/>
            <person name="Sanders M."/>
            <person name="Sharp S."/>
            <person name="Simmonds M."/>
            <person name="Stevens K."/>
            <person name="Whitehead S."/>
            <person name="Barrell B.G."/>
            <person name="Spratt B.G."/>
            <person name="Parkhill J."/>
        </authorList>
    </citation>
    <scope>NUCLEOTIDE SEQUENCE [LARGE SCALE GENOMIC DNA]</scope>
    <source>
        <strain>MRSA252</strain>
    </source>
</reference>
<accession>Q6GJZ6</accession>
<protein>
    <recommendedName>
        <fullName>Lipase 2</fullName>
        <ecNumber>3.1.1.3</ecNumber>
    </recommendedName>
    <alternativeName>
        <fullName>Glycerol ester hydrolase 2</fullName>
    </alternativeName>
</protein>
<feature type="signal peptide" evidence="2">
    <location>
        <begin position="1"/>
        <end position="37"/>
    </location>
</feature>
<feature type="propeptide" id="PRO_0000045192" evidence="1">
    <location>
        <begin position="38"/>
        <end position="296"/>
    </location>
</feature>
<feature type="chain" id="PRO_0000045193" description="Lipase 2">
    <location>
        <begin position="297"/>
        <end position="691"/>
    </location>
</feature>
<feature type="region of interest" description="Disordered" evidence="4">
    <location>
        <begin position="34"/>
        <end position="267"/>
    </location>
</feature>
<feature type="compositionally biased region" description="Polar residues" evidence="4">
    <location>
        <begin position="41"/>
        <end position="72"/>
    </location>
</feature>
<feature type="compositionally biased region" description="Basic and acidic residues" evidence="4">
    <location>
        <begin position="73"/>
        <end position="82"/>
    </location>
</feature>
<feature type="compositionally biased region" description="Polar residues" evidence="4">
    <location>
        <begin position="94"/>
        <end position="115"/>
    </location>
</feature>
<feature type="compositionally biased region" description="Polar residues" evidence="4">
    <location>
        <begin position="125"/>
        <end position="135"/>
    </location>
</feature>
<feature type="compositionally biased region" description="Polar residues" evidence="4">
    <location>
        <begin position="142"/>
        <end position="172"/>
    </location>
</feature>
<feature type="compositionally biased region" description="Polar residues" evidence="4">
    <location>
        <begin position="186"/>
        <end position="196"/>
    </location>
</feature>
<feature type="compositionally biased region" description="Basic and acidic residues" evidence="4">
    <location>
        <begin position="197"/>
        <end position="214"/>
    </location>
</feature>
<feature type="compositionally biased region" description="Basic and acidic residues" evidence="4">
    <location>
        <begin position="258"/>
        <end position="267"/>
    </location>
</feature>
<feature type="active site" description="Nucleophile" evidence="1">
    <location>
        <position position="413"/>
    </location>
</feature>
<feature type="active site" description="Charge relay system" evidence="3">
    <location>
        <position position="604"/>
    </location>
</feature>
<feature type="active site" description="Charge relay system" evidence="3">
    <location>
        <position position="646"/>
    </location>
</feature>
<feature type="binding site" evidence="1">
    <location>
        <position position="580"/>
    </location>
    <ligand>
        <name>Ca(2+)</name>
        <dbReference type="ChEBI" id="CHEBI:29108"/>
    </ligand>
</feature>
<feature type="binding site" evidence="1">
    <location>
        <position position="645"/>
    </location>
    <ligand>
        <name>Ca(2+)</name>
        <dbReference type="ChEBI" id="CHEBI:29108"/>
    </ligand>
</feature>
<feature type="binding site" evidence="1">
    <location>
        <position position="648"/>
    </location>
    <ligand>
        <name>Ca(2+)</name>
        <dbReference type="ChEBI" id="CHEBI:29108"/>
    </ligand>
</feature>
<feature type="binding site" evidence="1">
    <location>
        <position position="653"/>
    </location>
    <ligand>
        <name>Ca(2+)</name>
        <dbReference type="ChEBI" id="CHEBI:29108"/>
    </ligand>
</feature>
<feature type="binding site" evidence="1">
    <location>
        <position position="656"/>
    </location>
    <ligand>
        <name>Ca(2+)</name>
        <dbReference type="ChEBI" id="CHEBI:29108"/>
    </ligand>
</feature>
<evidence type="ECO:0000250" key="1"/>
<evidence type="ECO:0000255" key="2"/>
<evidence type="ECO:0000255" key="3">
    <source>
        <dbReference type="PROSITE-ProRule" id="PRU10037"/>
    </source>
</evidence>
<evidence type="ECO:0000256" key="4">
    <source>
        <dbReference type="SAM" id="MobiDB-lite"/>
    </source>
</evidence>
<evidence type="ECO:0000305" key="5"/>
<gene>
    <name type="primary">lip2</name>
    <name type="synonym">geh</name>
    <name type="ordered locus">SAR0317</name>
</gene>
<comment type="catalytic activity">
    <reaction>
        <text>a triacylglycerol + H2O = a diacylglycerol + a fatty acid + H(+)</text>
        <dbReference type="Rhea" id="RHEA:12044"/>
        <dbReference type="ChEBI" id="CHEBI:15377"/>
        <dbReference type="ChEBI" id="CHEBI:15378"/>
        <dbReference type="ChEBI" id="CHEBI:17855"/>
        <dbReference type="ChEBI" id="CHEBI:18035"/>
        <dbReference type="ChEBI" id="CHEBI:28868"/>
        <dbReference type="EC" id="3.1.1.3"/>
    </reaction>
</comment>
<comment type="subcellular location">
    <subcellularLocation>
        <location evidence="1">Secreted</location>
    </subcellularLocation>
</comment>
<comment type="similarity">
    <text evidence="5">Belongs to the AB hydrolase superfamily. Lipase family.</text>
</comment>
<sequence>MLRGQEERKYSIRKYSIGVVSVLAATMFVVTSHEAQASEKIPTTNAAAQKETLNQPGEQGNAITSHQMQSGKQLDDMHKENGKSGTVTEGKDMLQSSKHQSTQNSKIIRTQNDNQVKQDSERQGSKQSHQNNATNKTERQNDQIQNTHHAERNGSQSTTSQSNDVDKSQPSIPAQKVIPNHDKAAPTSTTPPSNDKTAPKSTKEQDATTDKHPNQQDTHQPAHQIIDAKQDDNVHQSNQKPQVGDLSKHIDGQNSPEKPTDKNTDNKQLIKDALQAPKTRSTTNAAADAKKVRPLKANQVQPLNKYPVVFVHGFLGLVGDNAPALYPNYWGGNKYKVIEELRKQGYNVHQASVSAFGSNYDRAVELYYYIKGGRVDYGAAHAAKYGHERYGKTYKGIMPNWEPGKKVHLVGHSMGGQTIRLMEEFLRNGNKEEIAYHKAHGGEISPLFTGGHNNMVASITTLATPHNGSQAADKFGNTEAVRKIMFALNRFMGNKYSNIDLGLTQWGFKQLPNESYIDYIKRVSKSKIWTSDDNAAYDLTLNGSAKLNNMTSMNPNITYTTYTGVSSHTGPLGYENPDLGTFFLMDTTSRIIGHDAREEWRKNDGVVPVISSLHPSNQPFVNVTNDEPATRRGIWQVKPIIQGWDHVDFIGVDFLDFKRKGAELANFYTGIINDLLRVEATESKGTQLKAS</sequence>